<proteinExistence type="predicted"/>
<gene>
    <name type="ORF">B ORF E</name>
</gene>
<feature type="chain" id="PRO_0000099674" description="Uncharacterized 10.5 kDa protein">
    <location>
        <begin position="1"/>
        <end position="91"/>
    </location>
</feature>
<accession>P68476</accession>
<accession>P20545</accession>
<name>YVBE_VACCW</name>
<organismHost>
    <name type="scientific">Bos taurus</name>
    <name type="common">Bovine</name>
    <dbReference type="NCBI Taxonomy" id="9913"/>
</organismHost>
<organism>
    <name type="scientific">Vaccinia virus (strain Western Reserve)</name>
    <name type="common">VACV</name>
    <name type="synonym">Vaccinia virus (strain WR)</name>
    <dbReference type="NCBI Taxonomy" id="10254"/>
    <lineage>
        <taxon>Viruses</taxon>
        <taxon>Varidnaviria</taxon>
        <taxon>Bamfordvirae</taxon>
        <taxon>Nucleocytoviricota</taxon>
        <taxon>Pokkesviricetes</taxon>
        <taxon>Chitovirales</taxon>
        <taxon>Poxviridae</taxon>
        <taxon>Chordopoxvirinae</taxon>
        <taxon>Orthopoxvirus</taxon>
        <taxon>Vaccinia virus</taxon>
    </lineage>
</organism>
<protein>
    <recommendedName>
        <fullName>Uncharacterized 10.5 kDa protein</fullName>
    </recommendedName>
</protein>
<dbReference type="EMBL" id="AY243312">
    <property type="status" value="NOT_ANNOTATED_CDS"/>
    <property type="molecule type" value="Genomic_DNA"/>
</dbReference>
<dbReference type="PIR" id="F42529">
    <property type="entry name" value="F42529"/>
</dbReference>
<dbReference type="SMR" id="P68476"/>
<dbReference type="Proteomes" id="UP000000344">
    <property type="component" value="Genome"/>
</dbReference>
<sequence>MYNSSIHTPEYDVIIHVIEHLKHHKQCVQTVTSGMVFTSPVSSSICTKSDDGRNLSDGFLLIRYITTDDFCTIFDIIPRHIFYQLANVDEH</sequence>
<keyword id="KW-1185">Reference proteome</keyword>
<reference key="1">
    <citation type="journal article" date="1991" name="J. Gen. Virol.">
        <title>Nucleotide sequence of 42 kbp of vaccinia virus strain WR from near the right inverted terminal repeat.</title>
        <authorList>
            <person name="Smith G.L."/>
            <person name="Chan Y.S."/>
            <person name="Howard S.T."/>
        </authorList>
    </citation>
    <scope>NUCLEOTIDE SEQUENCE [GENOMIC DNA]</scope>
</reference>